<dbReference type="EC" id="4.1.2.43"/>
<dbReference type="EMBL" id="BA000017">
    <property type="protein sequence ID" value="BAB56732.1"/>
    <property type="molecule type" value="Genomic_DNA"/>
</dbReference>
<dbReference type="SMR" id="Q99W39"/>
<dbReference type="DNASU" id="1120543"/>
<dbReference type="KEGG" id="sav:SAV0570"/>
<dbReference type="HOGENOM" id="CLU_081825_1_0_9"/>
<dbReference type="PhylomeDB" id="Q99W39"/>
<dbReference type="UniPathway" id="UPA00294">
    <property type="reaction ID" value="UER00434"/>
</dbReference>
<dbReference type="Proteomes" id="UP000002481">
    <property type="component" value="Chromosome"/>
</dbReference>
<dbReference type="GO" id="GO:0033982">
    <property type="term" value="F:3-dehydro-L-gulonate-6-phosphate decarboxylase activity"/>
    <property type="evidence" value="ECO:0007669"/>
    <property type="project" value="TreeGrafter"/>
</dbReference>
<dbReference type="GO" id="GO:0043801">
    <property type="term" value="F:hexulose-6-phosphate synthase activity"/>
    <property type="evidence" value="ECO:0007669"/>
    <property type="project" value="UniProtKB-EC"/>
</dbReference>
<dbReference type="GO" id="GO:0004590">
    <property type="term" value="F:orotidine-5'-phosphate decarboxylase activity"/>
    <property type="evidence" value="ECO:0007669"/>
    <property type="project" value="InterPro"/>
</dbReference>
<dbReference type="GO" id="GO:0006207">
    <property type="term" value="P:'de novo' pyrimidine nucleobase biosynthetic process"/>
    <property type="evidence" value="ECO:0007669"/>
    <property type="project" value="InterPro"/>
</dbReference>
<dbReference type="GO" id="GO:0019647">
    <property type="term" value="P:formaldehyde assimilation via ribulose monophosphate cycle"/>
    <property type="evidence" value="ECO:0007669"/>
    <property type="project" value="UniProtKB-UniPathway"/>
</dbReference>
<dbReference type="GO" id="GO:0019854">
    <property type="term" value="P:L-ascorbic acid catabolic process"/>
    <property type="evidence" value="ECO:0007669"/>
    <property type="project" value="TreeGrafter"/>
</dbReference>
<dbReference type="GO" id="GO:0006730">
    <property type="term" value="P:one-carbon metabolic process"/>
    <property type="evidence" value="ECO:0007669"/>
    <property type="project" value="UniProtKB-KW"/>
</dbReference>
<dbReference type="CDD" id="cd04726">
    <property type="entry name" value="KGPDC_HPS"/>
    <property type="match status" value="1"/>
</dbReference>
<dbReference type="FunFam" id="3.20.20.70:FF:000022">
    <property type="entry name" value="3-keto-L-gulonate-6-phosphate decarboxylase UlaD"/>
    <property type="match status" value="1"/>
</dbReference>
<dbReference type="Gene3D" id="3.20.20.70">
    <property type="entry name" value="Aldolase class I"/>
    <property type="match status" value="1"/>
</dbReference>
<dbReference type="InterPro" id="IPR017553">
    <property type="entry name" value="3-hexulose-6-phosphate_synth"/>
</dbReference>
<dbReference type="InterPro" id="IPR013785">
    <property type="entry name" value="Aldolase_TIM"/>
</dbReference>
<dbReference type="InterPro" id="IPR041710">
    <property type="entry name" value="HPS/KGPDC"/>
</dbReference>
<dbReference type="InterPro" id="IPR001754">
    <property type="entry name" value="OMPdeCOase_dom"/>
</dbReference>
<dbReference type="InterPro" id="IPR011060">
    <property type="entry name" value="RibuloseP-bd_barrel"/>
</dbReference>
<dbReference type="NCBIfam" id="TIGR03128">
    <property type="entry name" value="RuMP_HxlA"/>
    <property type="match status" value="1"/>
</dbReference>
<dbReference type="PANTHER" id="PTHR35039">
    <property type="entry name" value="3-KETO-L-GULONATE-6-PHOSPHATE DECARBOXYLASE SGBH-RELATED"/>
    <property type="match status" value="1"/>
</dbReference>
<dbReference type="PANTHER" id="PTHR35039:SF3">
    <property type="entry name" value="3-KETO-L-GULONATE-6-PHOSPHATE DECARBOXYLASE SGBH-RELATED"/>
    <property type="match status" value="1"/>
</dbReference>
<dbReference type="Pfam" id="PF00215">
    <property type="entry name" value="OMPdecase"/>
    <property type="match status" value="1"/>
</dbReference>
<dbReference type="SMART" id="SM00934">
    <property type="entry name" value="OMPdecase"/>
    <property type="match status" value="1"/>
</dbReference>
<dbReference type="SUPFAM" id="SSF51366">
    <property type="entry name" value="Ribulose-phoshate binding barrel"/>
    <property type="match status" value="1"/>
</dbReference>
<proteinExistence type="inferred from homology"/>
<accession>Q99W39</accession>
<feature type="chain" id="PRO_0000269519" description="3-hexulose-6-phosphate synthase">
    <location>
        <begin position="1"/>
        <end position="210"/>
    </location>
</feature>
<reference key="1">
    <citation type="journal article" date="2001" name="Lancet">
        <title>Whole genome sequencing of meticillin-resistant Staphylococcus aureus.</title>
        <authorList>
            <person name="Kuroda M."/>
            <person name="Ohta T."/>
            <person name="Uchiyama I."/>
            <person name="Baba T."/>
            <person name="Yuzawa H."/>
            <person name="Kobayashi I."/>
            <person name="Cui L."/>
            <person name="Oguchi A."/>
            <person name="Aoki K."/>
            <person name="Nagai Y."/>
            <person name="Lian J.-Q."/>
            <person name="Ito T."/>
            <person name="Kanamori M."/>
            <person name="Matsumaru H."/>
            <person name="Maruyama A."/>
            <person name="Murakami H."/>
            <person name="Hosoyama A."/>
            <person name="Mizutani-Ui Y."/>
            <person name="Takahashi N.K."/>
            <person name="Sawano T."/>
            <person name="Inoue R."/>
            <person name="Kaito C."/>
            <person name="Sekimizu K."/>
            <person name="Hirakawa H."/>
            <person name="Kuhara S."/>
            <person name="Goto S."/>
            <person name="Yabuzaki J."/>
            <person name="Kanehisa M."/>
            <person name="Yamashita A."/>
            <person name="Oshima K."/>
            <person name="Furuya K."/>
            <person name="Yoshino C."/>
            <person name="Shiba T."/>
            <person name="Hattori M."/>
            <person name="Ogasawara N."/>
            <person name="Hayashi H."/>
            <person name="Hiramatsu K."/>
        </authorList>
    </citation>
    <scope>NUCLEOTIDE SEQUENCE [LARGE SCALE GENOMIC DNA]</scope>
    <source>
        <strain>Mu50 / ATCC 700699</strain>
    </source>
</reference>
<gene>
    <name type="ordered locus">SAV0570</name>
</gene>
<evidence type="ECO:0000250" key="1"/>
<evidence type="ECO:0000305" key="2"/>
<protein>
    <recommendedName>
        <fullName>3-hexulose-6-phosphate synthase</fullName>
        <shortName>HPS</shortName>
        <ecNumber>4.1.2.43</ecNumber>
    </recommendedName>
    <alternativeName>
        <fullName>D-arabino-3-hexulose-6-phosphate formaldehyde lyase</fullName>
    </alternativeName>
</protein>
<organism>
    <name type="scientific">Staphylococcus aureus (strain Mu50 / ATCC 700699)</name>
    <dbReference type="NCBI Taxonomy" id="158878"/>
    <lineage>
        <taxon>Bacteria</taxon>
        <taxon>Bacillati</taxon>
        <taxon>Bacillota</taxon>
        <taxon>Bacilli</taxon>
        <taxon>Bacillales</taxon>
        <taxon>Staphylococcaceae</taxon>
        <taxon>Staphylococcus</taxon>
    </lineage>
</organism>
<comment type="function">
    <text evidence="1">Catalyzes the condensation of ribulose 5-phosphate with formaldehyde to form 3-hexulose 6-phosphate.</text>
</comment>
<comment type="catalytic activity">
    <reaction>
        <text>D-ribulose 5-phosphate + formaldehyde = D-arabino-hex-3-ulose 6-phosphate</text>
        <dbReference type="Rhea" id="RHEA:25201"/>
        <dbReference type="ChEBI" id="CHEBI:16842"/>
        <dbReference type="ChEBI" id="CHEBI:58121"/>
        <dbReference type="ChEBI" id="CHEBI:58542"/>
        <dbReference type="EC" id="4.1.2.43"/>
    </reaction>
</comment>
<comment type="pathway">
    <text>One-carbon metabolism; formaldehyde assimilation via RuMP pathway; D-fructose 6-phosphate from D-ribulose 5-phosphate and formaldehyde: step 1/2.</text>
</comment>
<comment type="similarity">
    <text evidence="2">Belongs to the HPS/KGPDC family. HPS subfamily.</text>
</comment>
<name>HPS_STAAM</name>
<keyword id="KW-0119">Carbohydrate metabolism</keyword>
<keyword id="KW-0456">Lyase</keyword>
<keyword id="KW-0554">One-carbon metabolism</keyword>
<sequence>MELQLAIDLLNKEDAAELANKVKDYVDIVEIGTPIIYNEGLPAVKHMADNISNVKVLADMKIMDAADYEVSQAIKFGADVITILGVAEDASIKAAIEEAHKNNKQLLVDMIAVQDLEKRAKELDEMGADYIAVHTGYDLQAEGQSPLESLRTVKSVIKNSKVAVAGGIKPDTIKDIVAESPDLVIVGGGIANADDPVEAAKQCRAAIEGK</sequence>